<accession>B7UKC4</accession>
<keyword id="KW-0067">ATP-binding</keyword>
<keyword id="KW-0963">Cytoplasm</keyword>
<keyword id="KW-0436">Ligase</keyword>
<keyword id="KW-0547">Nucleotide-binding</keyword>
<keyword id="KW-1185">Reference proteome</keyword>
<organism>
    <name type="scientific">Escherichia coli O127:H6 (strain E2348/69 / EPEC)</name>
    <dbReference type="NCBI Taxonomy" id="574521"/>
    <lineage>
        <taxon>Bacteria</taxon>
        <taxon>Pseudomonadati</taxon>
        <taxon>Pseudomonadota</taxon>
        <taxon>Gammaproteobacteria</taxon>
        <taxon>Enterobacterales</taxon>
        <taxon>Enterobacteriaceae</taxon>
        <taxon>Escherichia</taxon>
    </lineage>
</organism>
<proteinExistence type="inferred from homology"/>
<dbReference type="EC" id="6.5.1.4" evidence="1"/>
<dbReference type="EMBL" id="FM180568">
    <property type="protein sequence ID" value="CAS11212.1"/>
    <property type="molecule type" value="Genomic_DNA"/>
</dbReference>
<dbReference type="RefSeq" id="WP_012579010.1">
    <property type="nucleotide sequence ID" value="NC_011601.1"/>
</dbReference>
<dbReference type="SMR" id="B7UKC4"/>
<dbReference type="KEGG" id="ecg:E2348C_3664"/>
<dbReference type="HOGENOM" id="CLU_027882_0_0_6"/>
<dbReference type="Proteomes" id="UP000008205">
    <property type="component" value="Chromosome"/>
</dbReference>
<dbReference type="GO" id="GO:0005737">
    <property type="term" value="C:cytoplasm"/>
    <property type="evidence" value="ECO:0007669"/>
    <property type="project" value="UniProtKB-SubCell"/>
</dbReference>
<dbReference type="GO" id="GO:0005524">
    <property type="term" value="F:ATP binding"/>
    <property type="evidence" value="ECO:0007669"/>
    <property type="project" value="UniProtKB-KW"/>
</dbReference>
<dbReference type="GO" id="GO:0003963">
    <property type="term" value="F:RNA-3'-phosphate cyclase activity"/>
    <property type="evidence" value="ECO:0007669"/>
    <property type="project" value="UniProtKB-UniRule"/>
</dbReference>
<dbReference type="GO" id="GO:0006396">
    <property type="term" value="P:RNA processing"/>
    <property type="evidence" value="ECO:0007669"/>
    <property type="project" value="InterPro"/>
</dbReference>
<dbReference type="FunFam" id="3.65.10.20:FF:000002">
    <property type="entry name" value="GM19193"/>
    <property type="match status" value="1"/>
</dbReference>
<dbReference type="FunFam" id="3.30.360.20:FF:000003">
    <property type="entry name" value="RNA 3'-terminal phosphate cyclase"/>
    <property type="match status" value="1"/>
</dbReference>
<dbReference type="Gene3D" id="3.65.10.20">
    <property type="entry name" value="RNA 3'-terminal phosphate cyclase domain"/>
    <property type="match status" value="1"/>
</dbReference>
<dbReference type="Gene3D" id="3.30.360.20">
    <property type="entry name" value="RNA 3'-terminal phosphate cyclase, insert domain"/>
    <property type="match status" value="1"/>
</dbReference>
<dbReference type="HAMAP" id="MF_00200">
    <property type="entry name" value="RTC"/>
    <property type="match status" value="1"/>
</dbReference>
<dbReference type="InterPro" id="IPR013791">
    <property type="entry name" value="RNA3'-term_phos_cycl_insert"/>
</dbReference>
<dbReference type="InterPro" id="IPR023797">
    <property type="entry name" value="RNA3'_phos_cyclase_dom"/>
</dbReference>
<dbReference type="InterPro" id="IPR037136">
    <property type="entry name" value="RNA3'_phos_cyclase_dom_sf"/>
</dbReference>
<dbReference type="InterPro" id="IPR000228">
    <property type="entry name" value="RNA3'_term_phos_cyc"/>
</dbReference>
<dbReference type="InterPro" id="IPR017770">
    <property type="entry name" value="RNA3'_term_phos_cyc_type_1"/>
</dbReference>
<dbReference type="InterPro" id="IPR020719">
    <property type="entry name" value="RNA3'_term_phos_cycl-like_CS"/>
</dbReference>
<dbReference type="InterPro" id="IPR013792">
    <property type="entry name" value="RNA3'P_cycl/enolpyr_Trfase_a/b"/>
</dbReference>
<dbReference type="InterPro" id="IPR036553">
    <property type="entry name" value="RPTC_insert"/>
</dbReference>
<dbReference type="NCBIfam" id="NF003246">
    <property type="entry name" value="PRK04204.1-2"/>
    <property type="match status" value="1"/>
</dbReference>
<dbReference type="NCBIfam" id="NF003247">
    <property type="entry name" value="PRK04204.1-3"/>
    <property type="match status" value="1"/>
</dbReference>
<dbReference type="NCBIfam" id="TIGR03399">
    <property type="entry name" value="RNA_3prim_cycl"/>
    <property type="match status" value="1"/>
</dbReference>
<dbReference type="PANTHER" id="PTHR11096">
    <property type="entry name" value="RNA 3' TERMINAL PHOSPHATE CYCLASE"/>
    <property type="match status" value="1"/>
</dbReference>
<dbReference type="PANTHER" id="PTHR11096:SF0">
    <property type="entry name" value="RNA 3'-TERMINAL PHOSPHATE CYCLASE"/>
    <property type="match status" value="1"/>
</dbReference>
<dbReference type="Pfam" id="PF01137">
    <property type="entry name" value="RTC"/>
    <property type="match status" value="1"/>
</dbReference>
<dbReference type="Pfam" id="PF05189">
    <property type="entry name" value="RTC_insert"/>
    <property type="match status" value="1"/>
</dbReference>
<dbReference type="PIRSF" id="PIRSF005378">
    <property type="entry name" value="RNA3'_term_phos_cycl_euk"/>
    <property type="match status" value="1"/>
</dbReference>
<dbReference type="SUPFAM" id="SSF55205">
    <property type="entry name" value="EPT/RTPC-like"/>
    <property type="match status" value="2"/>
</dbReference>
<dbReference type="SUPFAM" id="SSF52913">
    <property type="entry name" value="RNA 3'-terminal phosphate cyclase, RPTC, insert domain"/>
    <property type="match status" value="1"/>
</dbReference>
<dbReference type="PROSITE" id="PS01287">
    <property type="entry name" value="RTC"/>
    <property type="match status" value="1"/>
</dbReference>
<protein>
    <recommendedName>
        <fullName evidence="1">RNA 3'-terminal phosphate cyclase</fullName>
        <shortName evidence="1">RNA cyclase</shortName>
        <shortName evidence="1">RNA-3'-phosphate cyclase</shortName>
        <ecNumber evidence="1">6.5.1.4</ecNumber>
    </recommendedName>
</protein>
<feature type="chain" id="PRO_1000195097" description="RNA 3'-terminal phosphate cyclase">
    <location>
        <begin position="1"/>
        <end position="338"/>
    </location>
</feature>
<feature type="active site" description="Tele-AMP-histidine intermediate" evidence="1">
    <location>
        <position position="308"/>
    </location>
</feature>
<feature type="binding site" evidence="1">
    <location>
        <position position="103"/>
    </location>
    <ligand>
        <name>ATP</name>
        <dbReference type="ChEBI" id="CHEBI:30616"/>
    </ligand>
</feature>
<feature type="binding site" evidence="1">
    <location>
        <begin position="283"/>
        <end position="287"/>
    </location>
    <ligand>
        <name>ATP</name>
        <dbReference type="ChEBI" id="CHEBI:30616"/>
    </ligand>
</feature>
<evidence type="ECO:0000255" key="1">
    <source>
        <dbReference type="HAMAP-Rule" id="MF_00200"/>
    </source>
</evidence>
<reference key="1">
    <citation type="journal article" date="2009" name="J. Bacteriol.">
        <title>Complete genome sequence and comparative genome analysis of enteropathogenic Escherichia coli O127:H6 strain E2348/69.</title>
        <authorList>
            <person name="Iguchi A."/>
            <person name="Thomson N.R."/>
            <person name="Ogura Y."/>
            <person name="Saunders D."/>
            <person name="Ooka T."/>
            <person name="Henderson I.R."/>
            <person name="Harris D."/>
            <person name="Asadulghani M."/>
            <person name="Kurokawa K."/>
            <person name="Dean P."/>
            <person name="Kenny B."/>
            <person name="Quail M.A."/>
            <person name="Thurston S."/>
            <person name="Dougan G."/>
            <person name="Hayashi T."/>
            <person name="Parkhill J."/>
            <person name="Frankel G."/>
        </authorList>
    </citation>
    <scope>NUCLEOTIDE SEQUENCE [LARGE SCALE GENOMIC DNA]</scope>
    <source>
        <strain>E2348/69 / EPEC</strain>
    </source>
</reference>
<sequence length="338" mass="35934">MKRMIALDGAQGEGGGQILRSALSLSMITGQPFTITGIRAGRAKPGLLRQHLTAVKAATEICRATVEGAELGSQRLVFRPGTVRGGDYRFAIGSAGSSTLVLQTVLPALWFADGPSRVEVSGGTDNPSAPPADFIRRVLEPLLAKMGIHQQTTLLRHGFYPAGGGVVATEVSPVASFNTLQLGERGNIVQMRGEVLLAGVPRHVAEREIATLVGSFSLHEQNIHNLPRDQGSGNTVSLEVESENITERFFIVGEKRVSAEVVAAQLVKEVKRYLASPAAVGEYLADQLVLPMALAGAGEFTVAHPSCHLLTNIAVVERFLSVRFSLVEADGVTRVSIE</sequence>
<comment type="function">
    <text evidence="1">Catalyzes the conversion of 3'-phosphate to a 2',3'-cyclic phosphodiester at the end of RNA. The mechanism of action of the enzyme occurs in 3 steps: (A) adenylation of the enzyme by ATP; (B) transfer of adenylate to an RNA-N3'P to produce RNA-N3'PP5'A; (C) and attack of the adjacent 2'-hydroxyl on the 3'-phosphorus in the diester linkage to produce the cyclic end product. The biological role of this enzyme is unknown but it is likely to function in some aspects of cellular RNA processing.</text>
</comment>
<comment type="catalytic activity">
    <reaction evidence="1">
        <text>a 3'-end 3'-phospho-ribonucleotide-RNA + ATP = a 3'-end 2',3'-cyclophospho-ribonucleotide-RNA + AMP + diphosphate</text>
        <dbReference type="Rhea" id="RHEA:23976"/>
        <dbReference type="Rhea" id="RHEA-COMP:10463"/>
        <dbReference type="Rhea" id="RHEA-COMP:10464"/>
        <dbReference type="ChEBI" id="CHEBI:30616"/>
        <dbReference type="ChEBI" id="CHEBI:33019"/>
        <dbReference type="ChEBI" id="CHEBI:83062"/>
        <dbReference type="ChEBI" id="CHEBI:83064"/>
        <dbReference type="ChEBI" id="CHEBI:456215"/>
        <dbReference type="EC" id="6.5.1.4"/>
    </reaction>
</comment>
<comment type="subcellular location">
    <subcellularLocation>
        <location evidence="1">Cytoplasm</location>
    </subcellularLocation>
</comment>
<comment type="similarity">
    <text evidence="1">Belongs to the RNA 3'-terminal cyclase family. Type 1 subfamily.</text>
</comment>
<gene>
    <name evidence="1" type="primary">rtcA</name>
    <name type="ordered locus">E2348C_3664</name>
</gene>
<name>RTCA_ECO27</name>